<keyword id="KW-1185">Reference proteome</keyword>
<keyword id="KW-0687">Ribonucleoprotein</keyword>
<keyword id="KW-0689">Ribosomal protein</keyword>
<evidence type="ECO:0000255" key="1">
    <source>
        <dbReference type="HAMAP-Rule" id="MF_00539"/>
    </source>
</evidence>
<evidence type="ECO:0000256" key="2">
    <source>
        <dbReference type="SAM" id="MobiDB-lite"/>
    </source>
</evidence>
<evidence type="ECO:0000305" key="3"/>
<proteinExistence type="inferred from homology"/>
<comment type="similarity">
    <text evidence="1">Belongs to the bacterial ribosomal protein bL27 family.</text>
</comment>
<protein>
    <recommendedName>
        <fullName evidence="1">Large ribosomal subunit protein bL27</fullName>
    </recommendedName>
    <alternativeName>
        <fullName evidence="3">50S ribosomal protein L27</fullName>
    </alternativeName>
</protein>
<accession>B9KIJ4</accession>
<dbReference type="EMBL" id="CP001079">
    <property type="protein sequence ID" value="ACM49306.1"/>
    <property type="molecule type" value="Genomic_DNA"/>
</dbReference>
<dbReference type="RefSeq" id="WP_010264498.1">
    <property type="nucleotide sequence ID" value="NZ_AFMS01000077.1"/>
</dbReference>
<dbReference type="SMR" id="B9KIJ4"/>
<dbReference type="STRING" id="320483.AMF_446"/>
<dbReference type="GeneID" id="7398247"/>
<dbReference type="KEGG" id="amf:AMF_446"/>
<dbReference type="eggNOG" id="COG0211">
    <property type="taxonomic scope" value="Bacteria"/>
</dbReference>
<dbReference type="HOGENOM" id="CLU_095424_4_1_5"/>
<dbReference type="Proteomes" id="UP000007307">
    <property type="component" value="Chromosome"/>
</dbReference>
<dbReference type="GO" id="GO:1990904">
    <property type="term" value="C:ribonucleoprotein complex"/>
    <property type="evidence" value="ECO:0007669"/>
    <property type="project" value="UniProtKB-KW"/>
</dbReference>
<dbReference type="GO" id="GO:0005840">
    <property type="term" value="C:ribosome"/>
    <property type="evidence" value="ECO:0007669"/>
    <property type="project" value="UniProtKB-KW"/>
</dbReference>
<dbReference type="GO" id="GO:0003735">
    <property type="term" value="F:structural constituent of ribosome"/>
    <property type="evidence" value="ECO:0007669"/>
    <property type="project" value="InterPro"/>
</dbReference>
<dbReference type="GO" id="GO:0006412">
    <property type="term" value="P:translation"/>
    <property type="evidence" value="ECO:0007669"/>
    <property type="project" value="UniProtKB-UniRule"/>
</dbReference>
<dbReference type="FunFam" id="2.40.50.100:FF:000020">
    <property type="entry name" value="50S ribosomal protein L27"/>
    <property type="match status" value="1"/>
</dbReference>
<dbReference type="Gene3D" id="2.40.50.100">
    <property type="match status" value="1"/>
</dbReference>
<dbReference type="HAMAP" id="MF_00539">
    <property type="entry name" value="Ribosomal_bL27"/>
    <property type="match status" value="1"/>
</dbReference>
<dbReference type="InterPro" id="IPR001684">
    <property type="entry name" value="Ribosomal_bL27"/>
</dbReference>
<dbReference type="InterPro" id="IPR018261">
    <property type="entry name" value="Ribosomal_bL27_CS"/>
</dbReference>
<dbReference type="NCBIfam" id="TIGR00062">
    <property type="entry name" value="L27"/>
    <property type="match status" value="1"/>
</dbReference>
<dbReference type="PANTHER" id="PTHR15893:SF0">
    <property type="entry name" value="LARGE RIBOSOMAL SUBUNIT PROTEIN BL27M"/>
    <property type="match status" value="1"/>
</dbReference>
<dbReference type="PANTHER" id="PTHR15893">
    <property type="entry name" value="RIBOSOMAL PROTEIN L27"/>
    <property type="match status" value="1"/>
</dbReference>
<dbReference type="Pfam" id="PF01016">
    <property type="entry name" value="Ribosomal_L27"/>
    <property type="match status" value="1"/>
</dbReference>
<dbReference type="PRINTS" id="PR00063">
    <property type="entry name" value="RIBOSOMALL27"/>
</dbReference>
<dbReference type="SUPFAM" id="SSF110324">
    <property type="entry name" value="Ribosomal L27 protein-like"/>
    <property type="match status" value="1"/>
</dbReference>
<dbReference type="PROSITE" id="PS00831">
    <property type="entry name" value="RIBOSOMAL_L27"/>
    <property type="match status" value="1"/>
</dbReference>
<feature type="chain" id="PRO_1000195872" description="Large ribosomal subunit protein bL27">
    <location>
        <begin position="1"/>
        <end position="90"/>
    </location>
</feature>
<feature type="region of interest" description="Disordered" evidence="2">
    <location>
        <begin position="1"/>
        <end position="20"/>
    </location>
</feature>
<feature type="compositionally biased region" description="Low complexity" evidence="2">
    <location>
        <begin position="1"/>
        <end position="13"/>
    </location>
</feature>
<reference key="1">
    <citation type="journal article" date="2009" name="BMC Genomics">
        <title>Conservation in the face of diversity: multistrain analysis of an intracellular bacterium.</title>
        <authorList>
            <person name="Dark M.J."/>
            <person name="Herndon D.R."/>
            <person name="Kappmeyer L.S."/>
            <person name="Gonzales M.P."/>
            <person name="Nordeen E."/>
            <person name="Palmer G.H."/>
            <person name="Knowles D.P. Jr."/>
            <person name="Brayton K.A."/>
        </authorList>
    </citation>
    <scope>NUCLEOTIDE SEQUENCE [LARGE SCALE GENOMIC DNA]</scope>
    <source>
        <strain>Florida</strain>
    </source>
</reference>
<name>RL27_ANAMF</name>
<sequence>MATKKSGGSSSNGRDSRGRRLGVKKFGSELVIPGNIIIRQRGTRYHPGRNVGMGKDHTIFSKIAGVVCFRKRTGGKVFVDVVPQSCLSSV</sequence>
<organism>
    <name type="scientific">Anaplasma marginale (strain Florida)</name>
    <dbReference type="NCBI Taxonomy" id="320483"/>
    <lineage>
        <taxon>Bacteria</taxon>
        <taxon>Pseudomonadati</taxon>
        <taxon>Pseudomonadota</taxon>
        <taxon>Alphaproteobacteria</taxon>
        <taxon>Rickettsiales</taxon>
        <taxon>Anaplasmataceae</taxon>
        <taxon>Anaplasma</taxon>
    </lineage>
</organism>
<gene>
    <name evidence="1" type="primary">rpmA</name>
    <name type="ordered locus">AMF_446</name>
</gene>